<name>EFGM_YARLI</name>
<protein>
    <recommendedName>
        <fullName evidence="1">Elongation factor G, mitochondrial</fullName>
        <shortName evidence="1">EF-Gmt</shortName>
    </recommendedName>
    <alternativeName>
        <fullName evidence="1">Elongation factor G 1, mitochondrial</fullName>
        <shortName evidence="1">mEF-G 1</shortName>
    </alternativeName>
    <alternativeName>
        <fullName evidence="1">Elongation factor G1</fullName>
    </alternativeName>
</protein>
<feature type="transit peptide" description="Mitochondrion" evidence="1">
    <location>
        <begin position="1"/>
        <end position="23"/>
    </location>
</feature>
<feature type="chain" id="PRO_0000385588" description="Elongation factor G, mitochondrial">
    <location>
        <begin position="24"/>
        <end position="764"/>
    </location>
</feature>
<feature type="domain" description="tr-type G">
    <location>
        <begin position="56"/>
        <end position="337"/>
    </location>
</feature>
<feature type="binding site" evidence="1">
    <location>
        <begin position="65"/>
        <end position="72"/>
    </location>
    <ligand>
        <name>GTP</name>
        <dbReference type="ChEBI" id="CHEBI:37565"/>
    </ligand>
</feature>
<feature type="binding site" evidence="1">
    <location>
        <begin position="136"/>
        <end position="140"/>
    </location>
    <ligand>
        <name>GTP</name>
        <dbReference type="ChEBI" id="CHEBI:37565"/>
    </ligand>
</feature>
<feature type="binding site" evidence="1">
    <location>
        <begin position="190"/>
        <end position="193"/>
    </location>
    <ligand>
        <name>GTP</name>
        <dbReference type="ChEBI" id="CHEBI:37565"/>
    </ligand>
</feature>
<dbReference type="EMBL" id="CR382130">
    <property type="protein sequence ID" value="CAG80714.1"/>
    <property type="molecule type" value="Genomic_DNA"/>
</dbReference>
<dbReference type="RefSeq" id="XP_502526.1">
    <property type="nucleotide sequence ID" value="XM_502526.1"/>
</dbReference>
<dbReference type="SMR" id="Q6C9Y6"/>
<dbReference type="FunCoup" id="Q6C9Y6">
    <property type="interactions" value="696"/>
</dbReference>
<dbReference type="STRING" id="284591.Q6C9Y6"/>
<dbReference type="EnsemblFungi" id="CAG80714">
    <property type="protein sequence ID" value="CAG80714"/>
    <property type="gene ID" value="YALI0_D07326g"/>
</dbReference>
<dbReference type="KEGG" id="yli:2910889"/>
<dbReference type="VEuPathDB" id="FungiDB:YALI0_D07326g"/>
<dbReference type="HOGENOM" id="CLU_002794_4_0_1"/>
<dbReference type="InParanoid" id="Q6C9Y6"/>
<dbReference type="OMA" id="GQFAKVQ"/>
<dbReference type="OrthoDB" id="105255at4891"/>
<dbReference type="UniPathway" id="UPA00345"/>
<dbReference type="Proteomes" id="UP000001300">
    <property type="component" value="Chromosome D"/>
</dbReference>
<dbReference type="GO" id="GO:0005739">
    <property type="term" value="C:mitochondrion"/>
    <property type="evidence" value="ECO:0000318"/>
    <property type="project" value="GO_Central"/>
</dbReference>
<dbReference type="GO" id="GO:0005525">
    <property type="term" value="F:GTP binding"/>
    <property type="evidence" value="ECO:0007669"/>
    <property type="project" value="UniProtKB-UniRule"/>
</dbReference>
<dbReference type="GO" id="GO:0003924">
    <property type="term" value="F:GTPase activity"/>
    <property type="evidence" value="ECO:0000318"/>
    <property type="project" value="GO_Central"/>
</dbReference>
<dbReference type="GO" id="GO:0003746">
    <property type="term" value="F:translation elongation factor activity"/>
    <property type="evidence" value="ECO:0000318"/>
    <property type="project" value="GO_Central"/>
</dbReference>
<dbReference type="GO" id="GO:0070125">
    <property type="term" value="P:mitochondrial translational elongation"/>
    <property type="evidence" value="ECO:0000318"/>
    <property type="project" value="GO_Central"/>
</dbReference>
<dbReference type="CDD" id="cd01886">
    <property type="entry name" value="EF-G"/>
    <property type="match status" value="1"/>
</dbReference>
<dbReference type="CDD" id="cd16262">
    <property type="entry name" value="EFG_III"/>
    <property type="match status" value="1"/>
</dbReference>
<dbReference type="CDD" id="cd01434">
    <property type="entry name" value="EFG_mtEFG1_IV"/>
    <property type="match status" value="1"/>
</dbReference>
<dbReference type="CDD" id="cd04097">
    <property type="entry name" value="mtEFG1_C"/>
    <property type="match status" value="1"/>
</dbReference>
<dbReference type="CDD" id="cd04091">
    <property type="entry name" value="mtEFG1_II_like"/>
    <property type="match status" value="1"/>
</dbReference>
<dbReference type="FunFam" id="3.30.70.870:FF:000001">
    <property type="entry name" value="Elongation factor G"/>
    <property type="match status" value="1"/>
</dbReference>
<dbReference type="FunFam" id="2.40.30.10:FF:000022">
    <property type="entry name" value="Elongation factor G, mitochondrial"/>
    <property type="match status" value="1"/>
</dbReference>
<dbReference type="FunFam" id="3.30.70.240:FF:000015">
    <property type="entry name" value="Elongation factor G, mitochondrial"/>
    <property type="match status" value="1"/>
</dbReference>
<dbReference type="FunFam" id="3.40.50.300:FF:000558">
    <property type="entry name" value="Elongation factor G, mitochondrial"/>
    <property type="match status" value="1"/>
</dbReference>
<dbReference type="Gene3D" id="3.30.230.10">
    <property type="match status" value="1"/>
</dbReference>
<dbReference type="Gene3D" id="3.30.70.240">
    <property type="match status" value="1"/>
</dbReference>
<dbReference type="Gene3D" id="3.30.70.870">
    <property type="entry name" value="Elongation Factor G (Translational Gtpase), domain 3"/>
    <property type="match status" value="1"/>
</dbReference>
<dbReference type="Gene3D" id="3.40.50.300">
    <property type="entry name" value="P-loop containing nucleotide triphosphate hydrolases"/>
    <property type="match status" value="1"/>
</dbReference>
<dbReference type="Gene3D" id="2.40.30.10">
    <property type="entry name" value="Translation factors"/>
    <property type="match status" value="1"/>
</dbReference>
<dbReference type="HAMAP" id="MF_00054_B">
    <property type="entry name" value="EF_G_EF_2_B"/>
    <property type="match status" value="1"/>
</dbReference>
<dbReference type="InterPro" id="IPR041095">
    <property type="entry name" value="EFG_II"/>
</dbReference>
<dbReference type="InterPro" id="IPR009022">
    <property type="entry name" value="EFG_III"/>
</dbReference>
<dbReference type="InterPro" id="IPR035647">
    <property type="entry name" value="EFG_III/V"/>
</dbReference>
<dbReference type="InterPro" id="IPR047872">
    <property type="entry name" value="EFG_IV"/>
</dbReference>
<dbReference type="InterPro" id="IPR035649">
    <property type="entry name" value="EFG_V"/>
</dbReference>
<dbReference type="InterPro" id="IPR000640">
    <property type="entry name" value="EFG_V-like"/>
</dbReference>
<dbReference type="InterPro" id="IPR004161">
    <property type="entry name" value="EFTu-like_2"/>
</dbReference>
<dbReference type="InterPro" id="IPR027417">
    <property type="entry name" value="P-loop_NTPase"/>
</dbReference>
<dbReference type="InterPro" id="IPR020568">
    <property type="entry name" value="Ribosomal_Su5_D2-typ_SF"/>
</dbReference>
<dbReference type="InterPro" id="IPR014721">
    <property type="entry name" value="Ribsml_uS5_D2-typ_fold_subgr"/>
</dbReference>
<dbReference type="InterPro" id="IPR005225">
    <property type="entry name" value="Small_GTP-bd"/>
</dbReference>
<dbReference type="InterPro" id="IPR000795">
    <property type="entry name" value="T_Tr_GTP-bd_dom"/>
</dbReference>
<dbReference type="InterPro" id="IPR009000">
    <property type="entry name" value="Transl_B-barrel_sf"/>
</dbReference>
<dbReference type="InterPro" id="IPR004540">
    <property type="entry name" value="Transl_elong_EFG/EF2"/>
</dbReference>
<dbReference type="InterPro" id="IPR005517">
    <property type="entry name" value="Transl_elong_EFG/EF2_IV"/>
</dbReference>
<dbReference type="NCBIfam" id="TIGR00484">
    <property type="entry name" value="EF-G"/>
    <property type="match status" value="1"/>
</dbReference>
<dbReference type="NCBIfam" id="NF009381">
    <property type="entry name" value="PRK12740.1-5"/>
    <property type="match status" value="1"/>
</dbReference>
<dbReference type="NCBIfam" id="TIGR00231">
    <property type="entry name" value="small_GTP"/>
    <property type="match status" value="1"/>
</dbReference>
<dbReference type="PANTHER" id="PTHR43636">
    <property type="entry name" value="ELONGATION FACTOR G, MITOCHONDRIAL"/>
    <property type="match status" value="1"/>
</dbReference>
<dbReference type="PANTHER" id="PTHR43636:SF2">
    <property type="entry name" value="ELONGATION FACTOR G, MITOCHONDRIAL"/>
    <property type="match status" value="1"/>
</dbReference>
<dbReference type="Pfam" id="PF00679">
    <property type="entry name" value="EFG_C"/>
    <property type="match status" value="1"/>
</dbReference>
<dbReference type="Pfam" id="PF14492">
    <property type="entry name" value="EFG_III"/>
    <property type="match status" value="1"/>
</dbReference>
<dbReference type="Pfam" id="PF03764">
    <property type="entry name" value="EFG_IV"/>
    <property type="match status" value="1"/>
</dbReference>
<dbReference type="Pfam" id="PF00009">
    <property type="entry name" value="GTP_EFTU"/>
    <property type="match status" value="1"/>
</dbReference>
<dbReference type="Pfam" id="PF03144">
    <property type="entry name" value="GTP_EFTU_D2"/>
    <property type="match status" value="1"/>
</dbReference>
<dbReference type="PRINTS" id="PR00315">
    <property type="entry name" value="ELONGATNFCT"/>
</dbReference>
<dbReference type="SMART" id="SM00838">
    <property type="entry name" value="EFG_C"/>
    <property type="match status" value="1"/>
</dbReference>
<dbReference type="SMART" id="SM00889">
    <property type="entry name" value="EFG_IV"/>
    <property type="match status" value="1"/>
</dbReference>
<dbReference type="SUPFAM" id="SSF54980">
    <property type="entry name" value="EF-G C-terminal domain-like"/>
    <property type="match status" value="2"/>
</dbReference>
<dbReference type="SUPFAM" id="SSF52540">
    <property type="entry name" value="P-loop containing nucleoside triphosphate hydrolases"/>
    <property type="match status" value="1"/>
</dbReference>
<dbReference type="SUPFAM" id="SSF54211">
    <property type="entry name" value="Ribosomal protein S5 domain 2-like"/>
    <property type="match status" value="1"/>
</dbReference>
<dbReference type="SUPFAM" id="SSF50447">
    <property type="entry name" value="Translation proteins"/>
    <property type="match status" value="1"/>
</dbReference>
<dbReference type="PROSITE" id="PS51722">
    <property type="entry name" value="G_TR_2"/>
    <property type="match status" value="1"/>
</dbReference>
<reference key="1">
    <citation type="journal article" date="2004" name="Nature">
        <title>Genome evolution in yeasts.</title>
        <authorList>
            <person name="Dujon B."/>
            <person name="Sherman D."/>
            <person name="Fischer G."/>
            <person name="Durrens P."/>
            <person name="Casaregola S."/>
            <person name="Lafontaine I."/>
            <person name="de Montigny J."/>
            <person name="Marck C."/>
            <person name="Neuveglise C."/>
            <person name="Talla E."/>
            <person name="Goffard N."/>
            <person name="Frangeul L."/>
            <person name="Aigle M."/>
            <person name="Anthouard V."/>
            <person name="Babour A."/>
            <person name="Barbe V."/>
            <person name="Barnay S."/>
            <person name="Blanchin S."/>
            <person name="Beckerich J.-M."/>
            <person name="Beyne E."/>
            <person name="Bleykasten C."/>
            <person name="Boisrame A."/>
            <person name="Boyer J."/>
            <person name="Cattolico L."/>
            <person name="Confanioleri F."/>
            <person name="de Daruvar A."/>
            <person name="Despons L."/>
            <person name="Fabre E."/>
            <person name="Fairhead C."/>
            <person name="Ferry-Dumazet H."/>
            <person name="Groppi A."/>
            <person name="Hantraye F."/>
            <person name="Hennequin C."/>
            <person name="Jauniaux N."/>
            <person name="Joyet P."/>
            <person name="Kachouri R."/>
            <person name="Kerrest A."/>
            <person name="Koszul R."/>
            <person name="Lemaire M."/>
            <person name="Lesur I."/>
            <person name="Ma L."/>
            <person name="Muller H."/>
            <person name="Nicaud J.-M."/>
            <person name="Nikolski M."/>
            <person name="Oztas S."/>
            <person name="Ozier-Kalogeropoulos O."/>
            <person name="Pellenz S."/>
            <person name="Potier S."/>
            <person name="Richard G.-F."/>
            <person name="Straub M.-L."/>
            <person name="Suleau A."/>
            <person name="Swennen D."/>
            <person name="Tekaia F."/>
            <person name="Wesolowski-Louvel M."/>
            <person name="Westhof E."/>
            <person name="Wirth B."/>
            <person name="Zeniou-Meyer M."/>
            <person name="Zivanovic Y."/>
            <person name="Bolotin-Fukuhara M."/>
            <person name="Thierry A."/>
            <person name="Bouchier C."/>
            <person name="Caudron B."/>
            <person name="Scarpelli C."/>
            <person name="Gaillardin C."/>
            <person name="Weissenbach J."/>
            <person name="Wincker P."/>
            <person name="Souciet J.-L."/>
        </authorList>
    </citation>
    <scope>NUCLEOTIDE SEQUENCE [LARGE SCALE GENOMIC DNA]</scope>
    <source>
        <strain>CLIB 122 / E 150</strain>
    </source>
</reference>
<keyword id="KW-0251">Elongation factor</keyword>
<keyword id="KW-0342">GTP-binding</keyword>
<keyword id="KW-0496">Mitochondrion</keyword>
<keyword id="KW-0547">Nucleotide-binding</keyword>
<keyword id="KW-0648">Protein biosynthesis</keyword>
<keyword id="KW-1185">Reference proteome</keyword>
<keyword id="KW-0809">Transit peptide</keyword>
<gene>
    <name evidence="1" type="primary">MEF1</name>
    <name type="ordered locus">YALI0D07326g</name>
</gene>
<evidence type="ECO:0000255" key="1">
    <source>
        <dbReference type="HAMAP-Rule" id="MF_03061"/>
    </source>
</evidence>
<evidence type="ECO:0000305" key="2"/>
<comment type="function">
    <text evidence="1">Mitochondrial GTPase that catalyzes the GTP-dependent ribosomal translocation step during translation elongation. During this step, the ribosome changes from the pre-translocational (PRE) to the post-translocational (POST) state as the newly formed A-site-bound peptidyl-tRNA and P-site-bound deacylated tRNA move to the P and E sites, respectively. Catalyzes the coordinated movement of the two tRNA molecules, the mRNA and conformational changes in the ribosome.</text>
</comment>
<comment type="pathway">
    <text evidence="1">Protein biosynthesis; polypeptide chain elongation.</text>
</comment>
<comment type="subcellular location">
    <subcellularLocation>
        <location evidence="1">Mitochondrion</location>
    </subcellularLocation>
</comment>
<comment type="similarity">
    <text evidence="2">Belongs to the TRAFAC class translation factor GTPase superfamily. Classic translation factor GTPase family. EF-G/EF-2 subfamily.</text>
</comment>
<proteinExistence type="inferred from homology"/>
<sequence>MIRSLRAVSRLGARGFSSFAAARQENTTVGTTYQEELDVVNQLKGSVTADDVTRLARMRNIGISAHIDSGKTTFSERILFYTGRTKEIHEVRGKDGVGAKMDHMDLEREKGITIQSAATYATWIKENQDYHFNVIDTPGHIDFTIEVERALRVLDGAVLVVCAVSGVQSQTMTVDRQMRRYNVPRVTFINKMDRMGADPWKAIDQINAKLKTRAAAIQVPIGSEGDLAGVVDIVKEVAYYNDGASGETIRVAEIPEDLKELVAEKRDLLIQTLADVDDEIAECYILEETPTEEQLRGAIRRATIARTFTPVLMGSALANRGVQPVLDAICEYLPDPSDVVNTALDIKKDETPVHLTPAAKAPFVGLAFKLEDGKYGQLTYLRVYQGQLKKGMSIINAKTGKKTKLARLVRMHSDEMEDVDSVGAGEICATFGVDCASGDTFTDGEVTYSMSSMFVPDPVISLAITPKDKGSLTNFSKAMNRFQKEDPTFRVHFDAESKETIISGMGELHLEIYVERMKREYNVVCETGKPQVAYRETITTAAPLDFTHKRQSGGAGQYARIIGEMSPVTDMNAVNEGKATFAAENIFKSEIVGGKIPEKFILACDRSFHETAEKGPLTGSRVLGVEMLINDGNTHVVDSSELAFKVATQRGFYETFMQCSPVILEPIMTVTLTAPVEFQGALIALMNKNQALISDQDIGSEEVTLSGECSLNQMFGFATHLRACTQGKGEFSLEFSHYAPCSPHLQKELVDAHQKKLQAERDGK</sequence>
<organism>
    <name type="scientific">Yarrowia lipolytica (strain CLIB 122 / E 150)</name>
    <name type="common">Yeast</name>
    <name type="synonym">Candida lipolytica</name>
    <dbReference type="NCBI Taxonomy" id="284591"/>
    <lineage>
        <taxon>Eukaryota</taxon>
        <taxon>Fungi</taxon>
        <taxon>Dikarya</taxon>
        <taxon>Ascomycota</taxon>
        <taxon>Saccharomycotina</taxon>
        <taxon>Dipodascomycetes</taxon>
        <taxon>Dipodascales</taxon>
        <taxon>Dipodascales incertae sedis</taxon>
        <taxon>Yarrowia</taxon>
    </lineage>
</organism>
<accession>Q6C9Y6</accession>